<organism>
    <name type="scientific">Arabidopsis thaliana</name>
    <name type="common">Mouse-ear cress</name>
    <dbReference type="NCBI Taxonomy" id="3702"/>
    <lineage>
        <taxon>Eukaryota</taxon>
        <taxon>Viridiplantae</taxon>
        <taxon>Streptophyta</taxon>
        <taxon>Embryophyta</taxon>
        <taxon>Tracheophyta</taxon>
        <taxon>Spermatophyta</taxon>
        <taxon>Magnoliopsida</taxon>
        <taxon>eudicotyledons</taxon>
        <taxon>Gunneridae</taxon>
        <taxon>Pentapetalae</taxon>
        <taxon>rosids</taxon>
        <taxon>malvids</taxon>
        <taxon>Brassicales</taxon>
        <taxon>Brassicaceae</taxon>
        <taxon>Camelineae</taxon>
        <taxon>Arabidopsis</taxon>
    </lineage>
</organism>
<protein>
    <recommendedName>
        <fullName>Nascent polypeptide-associated complex subunit alpha-like protein 4</fullName>
        <shortName>NAC-alpha-like protein 4</shortName>
    </recommendedName>
    <alternativeName>
        <fullName>Alpha-NAC-like protein 4</fullName>
    </alternativeName>
</protein>
<evidence type="ECO:0000250" key="1"/>
<evidence type="ECO:0000255" key="2">
    <source>
        <dbReference type="PROSITE-ProRule" id="PRU00507"/>
    </source>
</evidence>
<evidence type="ECO:0000256" key="3">
    <source>
        <dbReference type="SAM" id="MobiDB-lite"/>
    </source>
</evidence>
<evidence type="ECO:0000305" key="4"/>
<evidence type="ECO:0007744" key="5">
    <source>
    </source>
</evidence>
<reference key="1">
    <citation type="journal article" date="1999" name="Nature">
        <title>Sequence and analysis of chromosome 4 of the plant Arabidopsis thaliana.</title>
        <authorList>
            <person name="Mayer K.F.X."/>
            <person name="Schueller C."/>
            <person name="Wambutt R."/>
            <person name="Murphy G."/>
            <person name="Volckaert G."/>
            <person name="Pohl T."/>
            <person name="Duesterhoeft A."/>
            <person name="Stiekema W."/>
            <person name="Entian K.-D."/>
            <person name="Terryn N."/>
            <person name="Harris B."/>
            <person name="Ansorge W."/>
            <person name="Brandt P."/>
            <person name="Grivell L.A."/>
            <person name="Rieger M."/>
            <person name="Weichselgartner M."/>
            <person name="de Simone V."/>
            <person name="Obermaier B."/>
            <person name="Mache R."/>
            <person name="Mueller M."/>
            <person name="Kreis M."/>
            <person name="Delseny M."/>
            <person name="Puigdomenech P."/>
            <person name="Watson M."/>
            <person name="Schmidtheini T."/>
            <person name="Reichert B."/>
            <person name="Portetelle D."/>
            <person name="Perez-Alonso M."/>
            <person name="Boutry M."/>
            <person name="Bancroft I."/>
            <person name="Vos P."/>
            <person name="Hoheisel J."/>
            <person name="Zimmermann W."/>
            <person name="Wedler H."/>
            <person name="Ridley P."/>
            <person name="Langham S.-A."/>
            <person name="McCullagh B."/>
            <person name="Bilham L."/>
            <person name="Robben J."/>
            <person name="van der Schueren J."/>
            <person name="Grymonprez B."/>
            <person name="Chuang Y.-J."/>
            <person name="Vandenbussche F."/>
            <person name="Braeken M."/>
            <person name="Weltjens I."/>
            <person name="Voet M."/>
            <person name="Bastiaens I."/>
            <person name="Aert R."/>
            <person name="Defoor E."/>
            <person name="Weitzenegger T."/>
            <person name="Bothe G."/>
            <person name="Ramsperger U."/>
            <person name="Hilbert H."/>
            <person name="Braun M."/>
            <person name="Holzer E."/>
            <person name="Brandt A."/>
            <person name="Peters S."/>
            <person name="van Staveren M."/>
            <person name="Dirkse W."/>
            <person name="Mooijman P."/>
            <person name="Klein Lankhorst R."/>
            <person name="Rose M."/>
            <person name="Hauf J."/>
            <person name="Koetter P."/>
            <person name="Berneiser S."/>
            <person name="Hempel S."/>
            <person name="Feldpausch M."/>
            <person name="Lamberth S."/>
            <person name="Van den Daele H."/>
            <person name="De Keyser A."/>
            <person name="Buysshaert C."/>
            <person name="Gielen J."/>
            <person name="Villarroel R."/>
            <person name="De Clercq R."/>
            <person name="van Montagu M."/>
            <person name="Rogers J."/>
            <person name="Cronin A."/>
            <person name="Quail M.A."/>
            <person name="Bray-Allen S."/>
            <person name="Clark L."/>
            <person name="Doggett J."/>
            <person name="Hall S."/>
            <person name="Kay M."/>
            <person name="Lennard N."/>
            <person name="McLay K."/>
            <person name="Mayes R."/>
            <person name="Pettett A."/>
            <person name="Rajandream M.A."/>
            <person name="Lyne M."/>
            <person name="Benes V."/>
            <person name="Rechmann S."/>
            <person name="Borkova D."/>
            <person name="Bloecker H."/>
            <person name="Scharfe M."/>
            <person name="Grimm M."/>
            <person name="Loehnert T.-H."/>
            <person name="Dose S."/>
            <person name="de Haan M."/>
            <person name="Maarse A.C."/>
            <person name="Schaefer M."/>
            <person name="Mueller-Auer S."/>
            <person name="Gabel C."/>
            <person name="Fuchs M."/>
            <person name="Fartmann B."/>
            <person name="Granderath K."/>
            <person name="Dauner D."/>
            <person name="Herzl A."/>
            <person name="Neumann S."/>
            <person name="Argiriou A."/>
            <person name="Vitale D."/>
            <person name="Liguori R."/>
            <person name="Piravandi E."/>
            <person name="Massenet O."/>
            <person name="Quigley F."/>
            <person name="Clabauld G."/>
            <person name="Muendlein A."/>
            <person name="Felber R."/>
            <person name="Schnabl S."/>
            <person name="Hiller R."/>
            <person name="Schmidt W."/>
            <person name="Lecharny A."/>
            <person name="Aubourg S."/>
            <person name="Chefdor F."/>
            <person name="Cooke R."/>
            <person name="Berger C."/>
            <person name="Monfort A."/>
            <person name="Casacuberta E."/>
            <person name="Gibbons T."/>
            <person name="Weber N."/>
            <person name="Vandenbol M."/>
            <person name="Bargues M."/>
            <person name="Terol J."/>
            <person name="Torres A."/>
            <person name="Perez-Perez A."/>
            <person name="Purnelle B."/>
            <person name="Bent E."/>
            <person name="Johnson S."/>
            <person name="Tacon D."/>
            <person name="Jesse T."/>
            <person name="Heijnen L."/>
            <person name="Schwarz S."/>
            <person name="Scholler P."/>
            <person name="Heber S."/>
            <person name="Francs P."/>
            <person name="Bielke C."/>
            <person name="Frishman D."/>
            <person name="Haase D."/>
            <person name="Lemcke K."/>
            <person name="Mewes H.-W."/>
            <person name="Stocker S."/>
            <person name="Zaccaria P."/>
            <person name="Bevan M."/>
            <person name="Wilson R.K."/>
            <person name="de la Bastide M."/>
            <person name="Habermann K."/>
            <person name="Parnell L."/>
            <person name="Dedhia N."/>
            <person name="Gnoj L."/>
            <person name="Schutz K."/>
            <person name="Huang E."/>
            <person name="Spiegel L."/>
            <person name="Sekhon M."/>
            <person name="Murray J."/>
            <person name="Sheet P."/>
            <person name="Cordes M."/>
            <person name="Abu-Threideh J."/>
            <person name="Stoneking T."/>
            <person name="Kalicki J."/>
            <person name="Graves T."/>
            <person name="Harmon G."/>
            <person name="Edwards J."/>
            <person name="Latreille P."/>
            <person name="Courtney L."/>
            <person name="Cloud J."/>
            <person name="Abbott A."/>
            <person name="Scott K."/>
            <person name="Johnson D."/>
            <person name="Minx P."/>
            <person name="Bentley D."/>
            <person name="Fulton B."/>
            <person name="Miller N."/>
            <person name="Greco T."/>
            <person name="Kemp K."/>
            <person name="Kramer J."/>
            <person name="Fulton L."/>
            <person name="Mardis E."/>
            <person name="Dante M."/>
            <person name="Pepin K."/>
            <person name="Hillier L.W."/>
            <person name="Nelson J."/>
            <person name="Spieth J."/>
            <person name="Ryan E."/>
            <person name="Andrews S."/>
            <person name="Geisel C."/>
            <person name="Layman D."/>
            <person name="Du H."/>
            <person name="Ali J."/>
            <person name="Berghoff A."/>
            <person name="Jones K."/>
            <person name="Drone K."/>
            <person name="Cotton M."/>
            <person name="Joshu C."/>
            <person name="Antonoiu B."/>
            <person name="Zidanic M."/>
            <person name="Strong C."/>
            <person name="Sun H."/>
            <person name="Lamar B."/>
            <person name="Yordan C."/>
            <person name="Ma P."/>
            <person name="Zhong J."/>
            <person name="Preston R."/>
            <person name="Vil D."/>
            <person name="Shekher M."/>
            <person name="Matero A."/>
            <person name="Shah R."/>
            <person name="Swaby I.K."/>
            <person name="O'Shaughnessy A."/>
            <person name="Rodriguez M."/>
            <person name="Hoffman J."/>
            <person name="Till S."/>
            <person name="Granat S."/>
            <person name="Shohdy N."/>
            <person name="Hasegawa A."/>
            <person name="Hameed A."/>
            <person name="Lodhi M."/>
            <person name="Johnson A."/>
            <person name="Chen E."/>
            <person name="Marra M.A."/>
            <person name="Martienssen R."/>
            <person name="McCombie W.R."/>
        </authorList>
    </citation>
    <scope>NUCLEOTIDE SEQUENCE [LARGE SCALE GENOMIC DNA]</scope>
    <source>
        <strain>cv. Columbia</strain>
    </source>
</reference>
<reference key="2">
    <citation type="journal article" date="2017" name="Plant J.">
        <title>Araport11: a complete reannotation of the Arabidopsis thaliana reference genome.</title>
        <authorList>
            <person name="Cheng C.Y."/>
            <person name="Krishnakumar V."/>
            <person name="Chan A.P."/>
            <person name="Thibaud-Nissen F."/>
            <person name="Schobel S."/>
            <person name="Town C.D."/>
        </authorList>
    </citation>
    <scope>GENOME REANNOTATION</scope>
    <source>
        <strain>cv. Columbia</strain>
    </source>
</reference>
<reference key="3">
    <citation type="journal article" date="2003" name="Science">
        <title>Empirical analysis of transcriptional activity in the Arabidopsis genome.</title>
        <authorList>
            <person name="Yamada K."/>
            <person name="Lim J."/>
            <person name="Dale J.M."/>
            <person name="Chen H."/>
            <person name="Shinn P."/>
            <person name="Palm C.J."/>
            <person name="Southwick A.M."/>
            <person name="Wu H.C."/>
            <person name="Kim C.J."/>
            <person name="Nguyen M."/>
            <person name="Pham P.K."/>
            <person name="Cheuk R.F."/>
            <person name="Karlin-Newmann G."/>
            <person name="Liu S.X."/>
            <person name="Lam B."/>
            <person name="Sakano H."/>
            <person name="Wu T."/>
            <person name="Yu G."/>
            <person name="Miranda M."/>
            <person name="Quach H.L."/>
            <person name="Tripp M."/>
            <person name="Chang C.H."/>
            <person name="Lee J.M."/>
            <person name="Toriumi M.J."/>
            <person name="Chan M.M."/>
            <person name="Tang C.C."/>
            <person name="Onodera C.S."/>
            <person name="Deng J.M."/>
            <person name="Akiyama K."/>
            <person name="Ansari Y."/>
            <person name="Arakawa T."/>
            <person name="Banh J."/>
            <person name="Banno F."/>
            <person name="Bowser L."/>
            <person name="Brooks S.Y."/>
            <person name="Carninci P."/>
            <person name="Chao Q."/>
            <person name="Choy N."/>
            <person name="Enju A."/>
            <person name="Goldsmith A.D."/>
            <person name="Gurjal M."/>
            <person name="Hansen N.F."/>
            <person name="Hayashizaki Y."/>
            <person name="Johnson-Hopson C."/>
            <person name="Hsuan V.W."/>
            <person name="Iida K."/>
            <person name="Karnes M."/>
            <person name="Khan S."/>
            <person name="Koesema E."/>
            <person name="Ishida J."/>
            <person name="Jiang P.X."/>
            <person name="Jones T."/>
            <person name="Kawai J."/>
            <person name="Kamiya A."/>
            <person name="Meyers C."/>
            <person name="Nakajima M."/>
            <person name="Narusaka M."/>
            <person name="Seki M."/>
            <person name="Sakurai T."/>
            <person name="Satou M."/>
            <person name="Tamse R."/>
            <person name="Vaysberg M."/>
            <person name="Wallender E.K."/>
            <person name="Wong C."/>
            <person name="Yamamura Y."/>
            <person name="Yuan S."/>
            <person name="Shinozaki K."/>
            <person name="Davis R.W."/>
            <person name="Theologis A."/>
            <person name="Ecker J.R."/>
        </authorList>
    </citation>
    <scope>NUCLEOTIDE SEQUENCE [LARGE SCALE MRNA]</scope>
    <source>
        <strain>cv. Columbia</strain>
    </source>
</reference>
<reference key="4">
    <citation type="journal article" date="2012" name="Mol. Cell. Proteomics">
        <title>Comparative large-scale characterisation of plant vs. mammal proteins reveals similar and idiosyncratic N-alpha acetylation features.</title>
        <authorList>
            <person name="Bienvenut W.V."/>
            <person name="Sumpton D."/>
            <person name="Martinez A."/>
            <person name="Lilla S."/>
            <person name="Espagne C."/>
            <person name="Meinnel T."/>
            <person name="Giglione C."/>
        </authorList>
    </citation>
    <scope>CLEAVAGE OF INITIATOR METHIONINE [LARGE SCALE ANALYSIS]</scope>
    <scope>IDENTIFICATION BY MASS SPECTROMETRY [LARGE SCALE ANALYSIS]</scope>
</reference>
<feature type="initiator methionine" description="Removed" evidence="5">
    <location>
        <position position="1"/>
    </location>
</feature>
<feature type="chain" id="PRO_0000135590" description="Nascent polypeptide-associated complex subunit alpha-like protein 4">
    <location>
        <begin position="2"/>
        <end position="212"/>
    </location>
</feature>
<feature type="domain" description="NAC-A/B" evidence="2">
    <location>
        <begin position="65"/>
        <end position="130"/>
    </location>
</feature>
<feature type="domain" description="UBA">
    <location>
        <begin position="173"/>
        <end position="210"/>
    </location>
</feature>
<feature type="region of interest" description="Disordered" evidence="3">
    <location>
        <begin position="25"/>
        <end position="74"/>
    </location>
</feature>
<feature type="compositionally biased region" description="Basic and acidic residues" evidence="3">
    <location>
        <begin position="25"/>
        <end position="35"/>
    </location>
</feature>
<feature type="compositionally biased region" description="Acidic residues" evidence="3">
    <location>
        <begin position="36"/>
        <end position="53"/>
    </location>
</feature>
<gene>
    <name type="ordered locus">At4g10480</name>
    <name type="ORF">F7L13.60</name>
</gene>
<dbReference type="EMBL" id="AF118222">
    <property type="protein sequence ID" value="AAD03429.1"/>
    <property type="status" value="ALT_SEQ"/>
    <property type="molecule type" value="Genomic_DNA"/>
</dbReference>
<dbReference type="EMBL" id="AL049524">
    <property type="protein sequence ID" value="CAB40041.1"/>
    <property type="molecule type" value="Genomic_DNA"/>
</dbReference>
<dbReference type="EMBL" id="AL161517">
    <property type="protein sequence ID" value="CAB78171.1"/>
    <property type="molecule type" value="Genomic_DNA"/>
</dbReference>
<dbReference type="EMBL" id="CP002687">
    <property type="protein sequence ID" value="AEE82888.1"/>
    <property type="molecule type" value="Genomic_DNA"/>
</dbReference>
<dbReference type="EMBL" id="AY045811">
    <property type="protein sequence ID" value="AAK76485.1"/>
    <property type="molecule type" value="mRNA"/>
</dbReference>
<dbReference type="EMBL" id="AY062724">
    <property type="protein sequence ID" value="AAL32802.1"/>
    <property type="molecule type" value="mRNA"/>
</dbReference>
<dbReference type="EMBL" id="AY096615">
    <property type="protein sequence ID" value="AAM20265.1"/>
    <property type="molecule type" value="mRNA"/>
</dbReference>
<dbReference type="EMBL" id="AY114656">
    <property type="protein sequence ID" value="AAM47975.1"/>
    <property type="molecule type" value="mRNA"/>
</dbReference>
<dbReference type="PIR" id="T04183">
    <property type="entry name" value="T04183"/>
</dbReference>
<dbReference type="RefSeq" id="NP_192786.1">
    <molecule id="Q9SZY1-1"/>
    <property type="nucleotide sequence ID" value="NM_117116.4"/>
</dbReference>
<dbReference type="SMR" id="Q9SZY1"/>
<dbReference type="BioGRID" id="11939">
    <property type="interactions" value="11"/>
</dbReference>
<dbReference type="FunCoup" id="Q9SZY1">
    <property type="interactions" value="3102"/>
</dbReference>
<dbReference type="IntAct" id="Q9SZY1">
    <property type="interactions" value="4"/>
</dbReference>
<dbReference type="STRING" id="3702.Q9SZY1"/>
<dbReference type="iPTMnet" id="Q9SZY1"/>
<dbReference type="MetOSite" id="Q9SZY1"/>
<dbReference type="PaxDb" id="3702-AT4G10480.1"/>
<dbReference type="ProteomicsDB" id="251340">
    <molecule id="Q9SZY1-1"/>
</dbReference>
<dbReference type="EnsemblPlants" id="AT4G10480.1">
    <molecule id="Q9SZY1-1"/>
    <property type="protein sequence ID" value="AT4G10480.1"/>
    <property type="gene ID" value="AT4G10480"/>
</dbReference>
<dbReference type="GeneID" id="826640"/>
<dbReference type="Gramene" id="AT4G10480.1">
    <molecule id="Q9SZY1-1"/>
    <property type="protein sequence ID" value="AT4G10480.1"/>
    <property type="gene ID" value="AT4G10480"/>
</dbReference>
<dbReference type="KEGG" id="ath:AT4G10480"/>
<dbReference type="Araport" id="AT4G10480"/>
<dbReference type="TAIR" id="AT4G10480"/>
<dbReference type="eggNOG" id="KOG2239">
    <property type="taxonomic scope" value="Eukaryota"/>
</dbReference>
<dbReference type="HOGENOM" id="CLU_057806_3_0_1"/>
<dbReference type="InParanoid" id="Q9SZY1"/>
<dbReference type="OrthoDB" id="3169036at2759"/>
<dbReference type="PhylomeDB" id="Q9SZY1"/>
<dbReference type="CD-CODE" id="4299E36E">
    <property type="entry name" value="Nucleolus"/>
</dbReference>
<dbReference type="PRO" id="PR:Q9SZY1"/>
<dbReference type="Proteomes" id="UP000006548">
    <property type="component" value="Chromosome 4"/>
</dbReference>
<dbReference type="ExpressionAtlas" id="Q9SZY1">
    <property type="expression patterns" value="baseline and differential"/>
</dbReference>
<dbReference type="GO" id="GO:0005829">
    <property type="term" value="C:cytosol"/>
    <property type="evidence" value="ECO:0007005"/>
    <property type="project" value="TAIR"/>
</dbReference>
<dbReference type="GO" id="GO:0005854">
    <property type="term" value="C:nascent polypeptide-associated complex"/>
    <property type="evidence" value="ECO:0007669"/>
    <property type="project" value="InterPro"/>
</dbReference>
<dbReference type="GO" id="GO:0015031">
    <property type="term" value="P:protein transport"/>
    <property type="evidence" value="ECO:0007669"/>
    <property type="project" value="UniProtKB-KW"/>
</dbReference>
<dbReference type="CDD" id="cd22054">
    <property type="entry name" value="NAC_NACA"/>
    <property type="match status" value="1"/>
</dbReference>
<dbReference type="CDD" id="cd14358">
    <property type="entry name" value="UBA_NAC_euk"/>
    <property type="match status" value="1"/>
</dbReference>
<dbReference type="FunFam" id="2.20.70.30:FF:000002">
    <property type="entry name" value="Nascent polypeptide-associated complex (NAC), alpha subunit"/>
    <property type="match status" value="1"/>
</dbReference>
<dbReference type="FunFam" id="1.10.8.10:FF:000006">
    <property type="entry name" value="Putative nascent polypeptide-associated complex subunit alpha"/>
    <property type="match status" value="1"/>
</dbReference>
<dbReference type="Gene3D" id="1.10.8.10">
    <property type="entry name" value="DNA helicase RuvA subunit, C-terminal domain"/>
    <property type="match status" value="1"/>
</dbReference>
<dbReference type="Gene3D" id="2.20.70.30">
    <property type="entry name" value="Nascent polypeptide-associated complex domain"/>
    <property type="match status" value="1"/>
</dbReference>
<dbReference type="InterPro" id="IPR016641">
    <property type="entry name" value="EGD2/NACA0like"/>
</dbReference>
<dbReference type="InterPro" id="IPR044034">
    <property type="entry name" value="NAC-like_UBA"/>
</dbReference>
<dbReference type="InterPro" id="IPR038187">
    <property type="entry name" value="NAC_A/B_dom_sf"/>
</dbReference>
<dbReference type="InterPro" id="IPR002715">
    <property type="entry name" value="Nas_poly-pep-assoc_cplx_dom"/>
</dbReference>
<dbReference type="PANTHER" id="PTHR21713">
    <property type="entry name" value="NASCENT POLYPEPTIDE ASSOCIATED COMPLEX ALPHA SUBUNIT-RELATED"/>
    <property type="match status" value="1"/>
</dbReference>
<dbReference type="Pfam" id="PF01849">
    <property type="entry name" value="NAC"/>
    <property type="match status" value="1"/>
</dbReference>
<dbReference type="Pfam" id="PF19026">
    <property type="entry name" value="UBA_HYPK"/>
    <property type="match status" value="1"/>
</dbReference>
<dbReference type="SMART" id="SM01407">
    <property type="entry name" value="NAC"/>
    <property type="match status" value="1"/>
</dbReference>
<dbReference type="PROSITE" id="PS51151">
    <property type="entry name" value="NAC_AB"/>
    <property type="match status" value="1"/>
</dbReference>
<name>NACA4_ARATH</name>
<keyword id="KW-0025">Alternative splicing</keyword>
<keyword id="KW-0653">Protein transport</keyword>
<keyword id="KW-1185">Reference proteome</keyword>
<keyword id="KW-0813">Transport</keyword>
<proteinExistence type="evidence at protein level"/>
<comment type="function">
    <text evidence="1">May promote appropriate targeting of ribosome-nascent polypeptide complexes.</text>
</comment>
<comment type="alternative products">
    <event type="alternative splicing"/>
    <isoform>
        <id>Q9SZY1-1</id>
        <name>1</name>
        <sequence type="displayed"/>
    </isoform>
    <text>A number of isoforms are produced. According to EST sequences.</text>
</comment>
<comment type="similarity">
    <text evidence="4">Belongs to the NAC-alpha family.</text>
</comment>
<comment type="sequence caution" evidence="4">
    <conflict type="erroneous gene model prediction">
        <sequence resource="EMBL-CDS" id="AAD03429"/>
    </conflict>
</comment>
<sequence>MPGPVIEEVNEEALMDAIKEQMKLQKENDVVVEDVKDGDEDDDDVDDDDDEIADGAGENEASKQSRSEKKSRKAMLKLGMKPVTDVSRVTIKRSKNVLFVISKPDVFKSPNSETYVIFGEAKIDDMSSQLQAQAAQRFKMPDVASMIPNTDGSEAATVAQEEEDDEDVDETGVEAKDIDLVMTQAGVSRPKAVKALKESNGDIVSAIMELTT</sequence>
<accession>Q9SZY1</accession>
<accession>Q9ZSA6</accession>